<gene>
    <name evidence="1" type="primary">epd</name>
    <name type="ordered locus">ECIAI1_3047</name>
</gene>
<dbReference type="EC" id="1.2.1.72" evidence="1"/>
<dbReference type="EMBL" id="CU928160">
    <property type="protein sequence ID" value="CAQ99862.1"/>
    <property type="molecule type" value="Genomic_DNA"/>
</dbReference>
<dbReference type="RefSeq" id="WP_000218480.1">
    <property type="nucleotide sequence ID" value="NC_011741.1"/>
</dbReference>
<dbReference type="SMR" id="B7LYU4"/>
<dbReference type="GeneID" id="93779071"/>
<dbReference type="KEGG" id="ecr:ECIAI1_3047"/>
<dbReference type="HOGENOM" id="CLU_030140_0_2_6"/>
<dbReference type="UniPathway" id="UPA00244">
    <property type="reaction ID" value="UER00309"/>
</dbReference>
<dbReference type="GO" id="GO:0005737">
    <property type="term" value="C:cytoplasm"/>
    <property type="evidence" value="ECO:0007669"/>
    <property type="project" value="UniProtKB-SubCell"/>
</dbReference>
<dbReference type="GO" id="GO:0048001">
    <property type="term" value="F:erythrose-4-phosphate dehydrogenase activity"/>
    <property type="evidence" value="ECO:0007669"/>
    <property type="project" value="UniProtKB-UniRule"/>
</dbReference>
<dbReference type="GO" id="GO:0051287">
    <property type="term" value="F:NAD binding"/>
    <property type="evidence" value="ECO:0007669"/>
    <property type="project" value="InterPro"/>
</dbReference>
<dbReference type="GO" id="GO:0042823">
    <property type="term" value="P:pyridoxal phosphate biosynthetic process"/>
    <property type="evidence" value="ECO:0007669"/>
    <property type="project" value="UniProtKB-UniRule"/>
</dbReference>
<dbReference type="GO" id="GO:0008615">
    <property type="term" value="P:pyridoxine biosynthetic process"/>
    <property type="evidence" value="ECO:0007669"/>
    <property type="project" value="UniProtKB-UniRule"/>
</dbReference>
<dbReference type="CDD" id="cd23937">
    <property type="entry name" value="GAPDH_C_E4PDH"/>
    <property type="match status" value="1"/>
</dbReference>
<dbReference type="CDD" id="cd17892">
    <property type="entry name" value="GAPDH_N_E4PDH"/>
    <property type="match status" value="1"/>
</dbReference>
<dbReference type="FunFam" id="3.30.360.10:FF:000007">
    <property type="entry name" value="D-erythrose-4-phosphate dehydrogenase"/>
    <property type="match status" value="1"/>
</dbReference>
<dbReference type="FunFam" id="3.40.50.720:FF:000001">
    <property type="entry name" value="Glyceraldehyde-3-phosphate dehydrogenase"/>
    <property type="match status" value="1"/>
</dbReference>
<dbReference type="Gene3D" id="3.30.360.10">
    <property type="entry name" value="Dihydrodipicolinate Reductase, domain 2"/>
    <property type="match status" value="1"/>
</dbReference>
<dbReference type="Gene3D" id="3.40.50.720">
    <property type="entry name" value="NAD(P)-binding Rossmann-like Domain"/>
    <property type="match status" value="1"/>
</dbReference>
<dbReference type="HAMAP" id="MF_01640">
    <property type="entry name" value="E4P_dehydrog"/>
    <property type="match status" value="1"/>
</dbReference>
<dbReference type="InterPro" id="IPR006422">
    <property type="entry name" value="E4P_DH_bac"/>
</dbReference>
<dbReference type="InterPro" id="IPR020831">
    <property type="entry name" value="GlycerAld/Erythrose_P_DH"/>
</dbReference>
<dbReference type="InterPro" id="IPR020830">
    <property type="entry name" value="GlycerAld_3-P_DH_AS"/>
</dbReference>
<dbReference type="InterPro" id="IPR020829">
    <property type="entry name" value="GlycerAld_3-P_DH_cat"/>
</dbReference>
<dbReference type="InterPro" id="IPR020828">
    <property type="entry name" value="GlycerAld_3-P_DH_NAD(P)-bd"/>
</dbReference>
<dbReference type="InterPro" id="IPR036291">
    <property type="entry name" value="NAD(P)-bd_dom_sf"/>
</dbReference>
<dbReference type="NCBIfam" id="TIGR01532">
    <property type="entry name" value="E4PD_g-proteo"/>
    <property type="match status" value="1"/>
</dbReference>
<dbReference type="NCBIfam" id="NF010058">
    <property type="entry name" value="PRK13535.1"/>
    <property type="match status" value="1"/>
</dbReference>
<dbReference type="PANTHER" id="PTHR43148">
    <property type="entry name" value="GLYCERALDEHYDE-3-PHOSPHATE DEHYDROGENASE 2"/>
    <property type="match status" value="1"/>
</dbReference>
<dbReference type="Pfam" id="PF02800">
    <property type="entry name" value="Gp_dh_C"/>
    <property type="match status" value="1"/>
</dbReference>
<dbReference type="Pfam" id="PF00044">
    <property type="entry name" value="Gp_dh_N"/>
    <property type="match status" value="1"/>
</dbReference>
<dbReference type="PIRSF" id="PIRSF000149">
    <property type="entry name" value="GAP_DH"/>
    <property type="match status" value="1"/>
</dbReference>
<dbReference type="PRINTS" id="PR00078">
    <property type="entry name" value="G3PDHDRGNASE"/>
</dbReference>
<dbReference type="SMART" id="SM00846">
    <property type="entry name" value="Gp_dh_N"/>
    <property type="match status" value="1"/>
</dbReference>
<dbReference type="SUPFAM" id="SSF55347">
    <property type="entry name" value="Glyceraldehyde-3-phosphate dehydrogenase-like, C-terminal domain"/>
    <property type="match status" value="1"/>
</dbReference>
<dbReference type="SUPFAM" id="SSF51735">
    <property type="entry name" value="NAD(P)-binding Rossmann-fold domains"/>
    <property type="match status" value="1"/>
</dbReference>
<dbReference type="PROSITE" id="PS00071">
    <property type="entry name" value="GAPDH"/>
    <property type="match status" value="1"/>
</dbReference>
<reference key="1">
    <citation type="journal article" date="2009" name="PLoS Genet.">
        <title>Organised genome dynamics in the Escherichia coli species results in highly diverse adaptive paths.</title>
        <authorList>
            <person name="Touchon M."/>
            <person name="Hoede C."/>
            <person name="Tenaillon O."/>
            <person name="Barbe V."/>
            <person name="Baeriswyl S."/>
            <person name="Bidet P."/>
            <person name="Bingen E."/>
            <person name="Bonacorsi S."/>
            <person name="Bouchier C."/>
            <person name="Bouvet O."/>
            <person name="Calteau A."/>
            <person name="Chiapello H."/>
            <person name="Clermont O."/>
            <person name="Cruveiller S."/>
            <person name="Danchin A."/>
            <person name="Diard M."/>
            <person name="Dossat C."/>
            <person name="Karoui M.E."/>
            <person name="Frapy E."/>
            <person name="Garry L."/>
            <person name="Ghigo J.M."/>
            <person name="Gilles A.M."/>
            <person name="Johnson J."/>
            <person name="Le Bouguenec C."/>
            <person name="Lescat M."/>
            <person name="Mangenot S."/>
            <person name="Martinez-Jehanne V."/>
            <person name="Matic I."/>
            <person name="Nassif X."/>
            <person name="Oztas S."/>
            <person name="Petit M.A."/>
            <person name="Pichon C."/>
            <person name="Rouy Z."/>
            <person name="Ruf C.S."/>
            <person name="Schneider D."/>
            <person name="Tourret J."/>
            <person name="Vacherie B."/>
            <person name="Vallenet D."/>
            <person name="Medigue C."/>
            <person name="Rocha E.P.C."/>
            <person name="Denamur E."/>
        </authorList>
    </citation>
    <scope>NUCLEOTIDE SEQUENCE [LARGE SCALE GENOMIC DNA]</scope>
    <source>
        <strain>IAI1</strain>
    </source>
</reference>
<accession>B7LYU4</accession>
<proteinExistence type="inferred from homology"/>
<sequence>MTVRVAINGFGRIGRNVVRALYESGRRAEITVVAINELADAAGMAHLLKYDTSHGRFAWEVRQERDQLFVGDDAIRVLHERSLQSLPWRELGVDVVLDCTGVYGSREHGEAHIAAGAKKVLFSHPGSNDLDATVVYGVNQDQLRAEHRIVSNASCTTNCIIPVIKLLDDAYGIESGTVTTIHSAMHDQQVIDAYHPDLRRTRAASQSIIPVDTKLAAGITRFFPQFNDRFEAIAVRVPTINVTAIDLSVTVKKPVKANEVNLLLQKAAQGAFHGIVDYTELPLVSVDFNHDPHSAIVDGTQTRVSGAHLIKTLVWCDNEWGFANRMLDTTLAMATVAFR</sequence>
<protein>
    <recommendedName>
        <fullName evidence="1">D-erythrose-4-phosphate dehydrogenase</fullName>
        <shortName evidence="1">E4PDH</shortName>
        <ecNumber evidence="1">1.2.1.72</ecNumber>
    </recommendedName>
</protein>
<keyword id="KW-0963">Cytoplasm</keyword>
<keyword id="KW-0520">NAD</keyword>
<keyword id="KW-0560">Oxidoreductase</keyword>
<keyword id="KW-0664">Pyridoxine biosynthesis</keyword>
<evidence type="ECO:0000255" key="1">
    <source>
        <dbReference type="HAMAP-Rule" id="MF_01640"/>
    </source>
</evidence>
<comment type="function">
    <text evidence="1">Catalyzes the NAD-dependent conversion of D-erythrose 4-phosphate to 4-phosphoerythronate.</text>
</comment>
<comment type="catalytic activity">
    <reaction evidence="1">
        <text>D-erythrose 4-phosphate + NAD(+) + H2O = 4-phospho-D-erythronate + NADH + 2 H(+)</text>
        <dbReference type="Rhea" id="RHEA:12056"/>
        <dbReference type="ChEBI" id="CHEBI:15377"/>
        <dbReference type="ChEBI" id="CHEBI:15378"/>
        <dbReference type="ChEBI" id="CHEBI:16897"/>
        <dbReference type="ChEBI" id="CHEBI:57540"/>
        <dbReference type="ChEBI" id="CHEBI:57945"/>
        <dbReference type="ChEBI" id="CHEBI:58766"/>
        <dbReference type="EC" id="1.2.1.72"/>
    </reaction>
</comment>
<comment type="pathway">
    <text evidence="1">Cofactor biosynthesis; pyridoxine 5'-phosphate biosynthesis; pyridoxine 5'-phosphate from D-erythrose 4-phosphate: step 1/5.</text>
</comment>
<comment type="subunit">
    <text evidence="1">Homotetramer.</text>
</comment>
<comment type="subcellular location">
    <subcellularLocation>
        <location evidence="1">Cytoplasm</location>
    </subcellularLocation>
</comment>
<comment type="similarity">
    <text evidence="1">Belongs to the glyceraldehyde-3-phosphate dehydrogenase family. Epd subfamily.</text>
</comment>
<organism>
    <name type="scientific">Escherichia coli O8 (strain IAI1)</name>
    <dbReference type="NCBI Taxonomy" id="585034"/>
    <lineage>
        <taxon>Bacteria</taxon>
        <taxon>Pseudomonadati</taxon>
        <taxon>Pseudomonadota</taxon>
        <taxon>Gammaproteobacteria</taxon>
        <taxon>Enterobacterales</taxon>
        <taxon>Enterobacteriaceae</taxon>
        <taxon>Escherichia</taxon>
    </lineage>
</organism>
<feature type="chain" id="PRO_1000186823" description="D-erythrose-4-phosphate dehydrogenase">
    <location>
        <begin position="1"/>
        <end position="339"/>
    </location>
</feature>
<feature type="active site" description="Nucleophile" evidence="1">
    <location>
        <position position="155"/>
    </location>
</feature>
<feature type="binding site" evidence="1">
    <location>
        <begin position="12"/>
        <end position="13"/>
    </location>
    <ligand>
        <name>NAD(+)</name>
        <dbReference type="ChEBI" id="CHEBI:57540"/>
    </ligand>
</feature>
<feature type="binding site" evidence="1">
    <location>
        <position position="81"/>
    </location>
    <ligand>
        <name>NAD(+)</name>
        <dbReference type="ChEBI" id="CHEBI:57540"/>
    </ligand>
</feature>
<feature type="binding site" evidence="1">
    <location>
        <begin position="154"/>
        <end position="156"/>
    </location>
    <ligand>
        <name>substrate</name>
    </ligand>
</feature>
<feature type="binding site" evidence="1">
    <location>
        <position position="200"/>
    </location>
    <ligand>
        <name>substrate</name>
    </ligand>
</feature>
<feature type="binding site" evidence="1">
    <location>
        <begin position="213"/>
        <end position="214"/>
    </location>
    <ligand>
        <name>substrate</name>
    </ligand>
</feature>
<feature type="binding site" evidence="1">
    <location>
        <position position="236"/>
    </location>
    <ligand>
        <name>substrate</name>
    </ligand>
</feature>
<feature type="binding site" evidence="1">
    <location>
        <position position="318"/>
    </location>
    <ligand>
        <name>NAD(+)</name>
        <dbReference type="ChEBI" id="CHEBI:57540"/>
    </ligand>
</feature>
<feature type="site" description="Activates thiol group during catalysis" evidence="1">
    <location>
        <position position="182"/>
    </location>
</feature>
<name>E4PD_ECO8A</name>